<proteinExistence type="inferred from homology"/>
<sequence>MSDLKAAALRALKLMDLTTLNDDDTDEKVIALCKNAKTAVGNTAAVCIYPRFIPAAKKQLREQGTPEVRIATVTNFPHGNDDIEIAVAETKAAVAYGADEVDVVFPYRALIAGNADVGFELVKQCKAACGDILLKVIIETGELKTEALIKQASELSIKAGADFIKTSTGKVPVNATPEAAEIMLTVIKDMDVAKTVGFKPAGGVRTAEDAQAFLAMADRILGGDWADNMHYRFGASSLLANLLHTLGEGEEAAQGGY</sequence>
<evidence type="ECO:0000255" key="1">
    <source>
        <dbReference type="HAMAP-Rule" id="MF_00592"/>
    </source>
</evidence>
<dbReference type="EC" id="4.1.2.4" evidence="1"/>
<dbReference type="EMBL" id="CR378664">
    <property type="protein sequence ID" value="CAG19051.1"/>
    <property type="molecule type" value="Genomic_DNA"/>
</dbReference>
<dbReference type="RefSeq" id="WP_011217400.1">
    <property type="nucleotide sequence ID" value="NC_006370.1"/>
</dbReference>
<dbReference type="SMR" id="Q6LUH4"/>
<dbReference type="STRING" id="298386.PBPRA0630"/>
<dbReference type="KEGG" id="ppr:PBPRA0630"/>
<dbReference type="eggNOG" id="COG0274">
    <property type="taxonomic scope" value="Bacteria"/>
</dbReference>
<dbReference type="HOGENOM" id="CLU_053595_3_1_6"/>
<dbReference type="UniPathway" id="UPA00002">
    <property type="reaction ID" value="UER00468"/>
</dbReference>
<dbReference type="Proteomes" id="UP000000593">
    <property type="component" value="Chromosome 1"/>
</dbReference>
<dbReference type="GO" id="GO:0005737">
    <property type="term" value="C:cytoplasm"/>
    <property type="evidence" value="ECO:0007669"/>
    <property type="project" value="UniProtKB-SubCell"/>
</dbReference>
<dbReference type="GO" id="GO:0004139">
    <property type="term" value="F:deoxyribose-phosphate aldolase activity"/>
    <property type="evidence" value="ECO:0007669"/>
    <property type="project" value="UniProtKB-UniRule"/>
</dbReference>
<dbReference type="GO" id="GO:0006018">
    <property type="term" value="P:2-deoxyribose 1-phosphate catabolic process"/>
    <property type="evidence" value="ECO:0007669"/>
    <property type="project" value="UniProtKB-UniRule"/>
</dbReference>
<dbReference type="GO" id="GO:0016052">
    <property type="term" value="P:carbohydrate catabolic process"/>
    <property type="evidence" value="ECO:0007669"/>
    <property type="project" value="TreeGrafter"/>
</dbReference>
<dbReference type="GO" id="GO:0009264">
    <property type="term" value="P:deoxyribonucleotide catabolic process"/>
    <property type="evidence" value="ECO:0007669"/>
    <property type="project" value="InterPro"/>
</dbReference>
<dbReference type="CDD" id="cd00959">
    <property type="entry name" value="DeoC"/>
    <property type="match status" value="1"/>
</dbReference>
<dbReference type="FunFam" id="3.20.20.70:FF:000034">
    <property type="entry name" value="Deoxyribose-phosphate aldolase"/>
    <property type="match status" value="1"/>
</dbReference>
<dbReference type="Gene3D" id="3.20.20.70">
    <property type="entry name" value="Aldolase class I"/>
    <property type="match status" value="1"/>
</dbReference>
<dbReference type="HAMAP" id="MF_00592">
    <property type="entry name" value="DeoC_type2"/>
    <property type="match status" value="1"/>
</dbReference>
<dbReference type="InterPro" id="IPR013785">
    <property type="entry name" value="Aldolase_TIM"/>
</dbReference>
<dbReference type="InterPro" id="IPR011343">
    <property type="entry name" value="DeoC"/>
</dbReference>
<dbReference type="InterPro" id="IPR002915">
    <property type="entry name" value="DeoC/FbaB/LacD_aldolase"/>
</dbReference>
<dbReference type="InterPro" id="IPR023649">
    <property type="entry name" value="DeoC_typeII"/>
</dbReference>
<dbReference type="NCBIfam" id="TIGR00126">
    <property type="entry name" value="deoC"/>
    <property type="match status" value="1"/>
</dbReference>
<dbReference type="PANTHER" id="PTHR10889">
    <property type="entry name" value="DEOXYRIBOSE-PHOSPHATE ALDOLASE"/>
    <property type="match status" value="1"/>
</dbReference>
<dbReference type="PANTHER" id="PTHR10889:SF3">
    <property type="entry name" value="DEOXYRIBOSE-PHOSPHATE ALDOLASE"/>
    <property type="match status" value="1"/>
</dbReference>
<dbReference type="Pfam" id="PF01791">
    <property type="entry name" value="DeoC"/>
    <property type="match status" value="1"/>
</dbReference>
<dbReference type="PIRSF" id="PIRSF001357">
    <property type="entry name" value="DeoC"/>
    <property type="match status" value="1"/>
</dbReference>
<dbReference type="SMART" id="SM01133">
    <property type="entry name" value="DeoC"/>
    <property type="match status" value="1"/>
</dbReference>
<dbReference type="SUPFAM" id="SSF51569">
    <property type="entry name" value="Aldolase"/>
    <property type="match status" value="1"/>
</dbReference>
<comment type="function">
    <text evidence="1">Catalyzes a reversible aldol reaction between acetaldehyde and D-glyceraldehyde 3-phosphate to generate 2-deoxy-D-ribose 5-phosphate.</text>
</comment>
<comment type="catalytic activity">
    <reaction evidence="1">
        <text>2-deoxy-D-ribose 5-phosphate = D-glyceraldehyde 3-phosphate + acetaldehyde</text>
        <dbReference type="Rhea" id="RHEA:12821"/>
        <dbReference type="ChEBI" id="CHEBI:15343"/>
        <dbReference type="ChEBI" id="CHEBI:59776"/>
        <dbReference type="ChEBI" id="CHEBI:62877"/>
        <dbReference type="EC" id="4.1.2.4"/>
    </reaction>
</comment>
<comment type="pathway">
    <text evidence="1">Carbohydrate degradation; 2-deoxy-D-ribose 1-phosphate degradation; D-glyceraldehyde 3-phosphate and acetaldehyde from 2-deoxy-alpha-D-ribose 1-phosphate: step 2/2.</text>
</comment>
<comment type="subcellular location">
    <subcellularLocation>
        <location evidence="1">Cytoplasm</location>
    </subcellularLocation>
</comment>
<comment type="similarity">
    <text evidence="1">Belongs to the DeoC/FbaB aldolase family. DeoC type 2 subfamily.</text>
</comment>
<accession>Q6LUH4</accession>
<feature type="chain" id="PRO_1000072600" description="Deoxyribose-phosphate aldolase">
    <location>
        <begin position="1"/>
        <end position="257"/>
    </location>
</feature>
<feature type="active site" description="Proton donor/acceptor" evidence="1">
    <location>
        <position position="102"/>
    </location>
</feature>
<feature type="active site" description="Schiff-base intermediate with acetaldehyde" evidence="1">
    <location>
        <position position="165"/>
    </location>
</feature>
<feature type="active site" description="Proton donor/acceptor" evidence="1">
    <location>
        <position position="199"/>
    </location>
</feature>
<organism>
    <name type="scientific">Photobacterium profundum (strain SS9)</name>
    <dbReference type="NCBI Taxonomy" id="298386"/>
    <lineage>
        <taxon>Bacteria</taxon>
        <taxon>Pseudomonadati</taxon>
        <taxon>Pseudomonadota</taxon>
        <taxon>Gammaproteobacteria</taxon>
        <taxon>Vibrionales</taxon>
        <taxon>Vibrionaceae</taxon>
        <taxon>Photobacterium</taxon>
    </lineage>
</organism>
<keyword id="KW-0963">Cytoplasm</keyword>
<keyword id="KW-0456">Lyase</keyword>
<keyword id="KW-1185">Reference proteome</keyword>
<keyword id="KW-0704">Schiff base</keyword>
<name>DEOC_PHOPR</name>
<reference key="1">
    <citation type="journal article" date="2005" name="Science">
        <title>Life at depth: Photobacterium profundum genome sequence and expression analysis.</title>
        <authorList>
            <person name="Vezzi A."/>
            <person name="Campanaro S."/>
            <person name="D'Angelo M."/>
            <person name="Simonato F."/>
            <person name="Vitulo N."/>
            <person name="Lauro F.M."/>
            <person name="Cestaro A."/>
            <person name="Malacrida G."/>
            <person name="Simionati B."/>
            <person name="Cannata N."/>
            <person name="Romualdi C."/>
            <person name="Bartlett D.H."/>
            <person name="Valle G."/>
        </authorList>
    </citation>
    <scope>NUCLEOTIDE SEQUENCE [LARGE SCALE GENOMIC DNA]</scope>
    <source>
        <strain>ATCC BAA-1253 / SS9</strain>
    </source>
</reference>
<protein>
    <recommendedName>
        <fullName evidence="1">Deoxyribose-phosphate aldolase</fullName>
        <shortName evidence="1">DERA</shortName>
        <ecNumber evidence="1">4.1.2.4</ecNumber>
    </recommendedName>
    <alternativeName>
        <fullName evidence="1">2-deoxy-D-ribose 5-phosphate aldolase</fullName>
    </alternativeName>
    <alternativeName>
        <fullName evidence="1">Phosphodeoxyriboaldolase</fullName>
        <shortName evidence="1">Deoxyriboaldolase</shortName>
    </alternativeName>
</protein>
<gene>
    <name evidence="1" type="primary">deoC</name>
    <name type="ordered locus">PBPRA0630</name>
</gene>